<proteinExistence type="inferred from homology"/>
<comment type="function">
    <text evidence="3">Capsid protein that self-associates to form pentons, building the capsid in association with hexamers of the major capsid protein and one dodecamer of the portal protein.</text>
</comment>
<comment type="subunit">
    <text evidence="1 3">Homopentamer. Interacts with the portal protein. Interacts with the major capsid protein that forms hexamers.</text>
</comment>
<comment type="subcellular location">
    <molecule>Capsid vertex protein</molecule>
    <subcellularLocation>
        <location>Virion</location>
    </subcellularLocation>
    <text evidence="3">Part of the capsid icosahedric shell of the immature virion.</text>
</comment>
<comment type="similarity">
    <text evidence="4">Belongs to the Tevenvirinae capsid vertex family.</text>
</comment>
<organismHost>
    <name type="scientific">Vibrio parahaemolyticus</name>
    <dbReference type="NCBI Taxonomy" id="670"/>
</organismHost>
<reference key="1">
    <citation type="journal article" date="2003" name="J. Bacteriol.">
        <title>Complete genome sequence of the broad-host-range vibriophage KVP40: comparative genomics of a T4-related bacteriophage.</title>
        <authorList>
            <person name="Miller E.S."/>
            <person name="Heidelberg J.F."/>
            <person name="Eisen J.A."/>
            <person name="Nelson W.C."/>
            <person name="Durkin A.S."/>
            <person name="Ciecko A."/>
            <person name="Feldblyum T.V."/>
            <person name="White O."/>
            <person name="Paulsen I.T."/>
            <person name="Nierman W.C."/>
            <person name="Lee J."/>
            <person name="Szczypinski B."/>
            <person name="Fraser C.M."/>
        </authorList>
    </citation>
    <scope>NUCLEOTIDE SEQUENCE [LARGE SCALE GENOMIC DNA]</scope>
    <source>
        <strain>Isolate Vibrio parahaemolyticus/Japan/Matsuzaki /1991</strain>
    </source>
</reference>
<accession>Q6WI88</accession>
<evidence type="ECO:0000250" key="1">
    <source>
        <dbReference type="UniProtKB" id="P04535"/>
    </source>
</evidence>
<evidence type="ECO:0000250" key="2">
    <source>
        <dbReference type="UniProtKB" id="P19896"/>
    </source>
</evidence>
<evidence type="ECO:0000255" key="3">
    <source>
        <dbReference type="HAMAP-Rule" id="MF_04113"/>
    </source>
</evidence>
<evidence type="ECO:0000305" key="4"/>
<evidence type="ECO:0000312" key="5">
    <source>
        <dbReference type="EMBL" id="AAQ64134.1"/>
    </source>
</evidence>
<organism>
    <name type="scientific">Vibrio phage KVP40 (isolate Vibrio parahaemolyticus/Japan/Matsuzaki/1991)</name>
    <name type="common">KVP40</name>
    <name type="synonym">Bacteriophage KVP40</name>
    <dbReference type="NCBI Taxonomy" id="75320"/>
    <lineage>
        <taxon>Viruses</taxon>
        <taxon>Duplodnaviria</taxon>
        <taxon>Heunggongvirae</taxon>
        <taxon>Uroviricota</taxon>
        <taxon>Caudoviricetes</taxon>
        <taxon>Straboviridae</taxon>
        <taxon>Schizotequatrovirus</taxon>
        <taxon>Schizotequatrovirus KVP40</taxon>
    </lineage>
</organism>
<name>CAPSP_BPKVM</name>
<gene>
    <name evidence="5" type="primary">24</name>
    <name evidence="5" type="ORF">KVP40.0063</name>
</gene>
<dbReference type="EMBL" id="AY283928">
    <property type="protein sequence ID" value="AAQ64134.1"/>
    <property type="molecule type" value="Genomic_DNA"/>
</dbReference>
<dbReference type="RefSeq" id="NP_899311.1">
    <property type="nucleotide sequence ID" value="NC_005083.2"/>
</dbReference>
<dbReference type="SMR" id="Q6WI88"/>
<dbReference type="GeneID" id="2545702"/>
<dbReference type="KEGG" id="vg:2545702"/>
<dbReference type="OrthoDB" id="7890at10239"/>
<dbReference type="Proteomes" id="UP000001785">
    <property type="component" value="Genome"/>
</dbReference>
<dbReference type="GO" id="GO:0019028">
    <property type="term" value="C:viral capsid"/>
    <property type="evidence" value="ECO:0007669"/>
    <property type="project" value="UniProtKB-UniRule"/>
</dbReference>
<dbReference type="Gene3D" id="3.30.2320.40">
    <property type="match status" value="1"/>
</dbReference>
<dbReference type="HAMAP" id="MF_04113">
    <property type="entry name" value="CAPSID_P_T4"/>
    <property type="match status" value="1"/>
</dbReference>
<dbReference type="InterPro" id="IPR038999">
    <property type="entry name" value="CAPSP"/>
</dbReference>
<dbReference type="InterPro" id="IPR010762">
    <property type="entry name" value="Gp23/Gp24_T4-like"/>
</dbReference>
<dbReference type="Pfam" id="PF07068">
    <property type="entry name" value="Gp23"/>
    <property type="match status" value="1"/>
</dbReference>
<feature type="chain" id="PRO_0000432345" description="Capsid vertex protein">
    <location>
        <begin position="1"/>
        <end position="298"/>
    </location>
</feature>
<keyword id="KW-0167">Capsid protein</keyword>
<keyword id="KW-0426">Late protein</keyword>
<keyword id="KW-1185">Reference proteome</keyword>
<keyword id="KW-0946">Virion</keyword>
<sequence length="298" mass="32272">MTVSNSNGLPDIVTVQKRLYPLIFTEIVSEQPTKQPVATAYGFKAVPEADDGSGWTQFGFRLDRWYAQVESSKMKTEISLETLQDMQALGVSNSVIVDSLADQIADEINTSIIGALNSISTVGAALTLTGNTDFEKGQDLYTKVHLAASEIEKTTGCKGTYVVAGGKCFGYLTGCGVVQRVGESDVYKAWSGLYIVHDKYATSDYVTVGVKKDMGDYEISSLVFSPYQFDQANDGAIAYQYKGTDPKSFHPVYGVIARYALTVPPLEDNQTGAVEIDWSNLGALANSSKLSYTYAVTV</sequence>
<protein>
    <recommendedName>
        <fullName evidence="2 3">Capsid vertex protein</fullName>
    </recommendedName>
    <alternativeName>
        <fullName evidence="2">Gene product 24</fullName>
    </alternativeName>
    <alternativeName>
        <fullName evidence="2 3">gp24</fullName>
    </alternativeName>
</protein>